<name>RL31_EREGS</name>
<reference key="1">
    <citation type="journal article" date="2004" name="Science">
        <title>The Ashbya gossypii genome as a tool for mapping the ancient Saccharomyces cerevisiae genome.</title>
        <authorList>
            <person name="Dietrich F.S."/>
            <person name="Voegeli S."/>
            <person name="Brachat S."/>
            <person name="Lerch A."/>
            <person name="Gates K."/>
            <person name="Steiner S."/>
            <person name="Mohr C."/>
            <person name="Poehlmann R."/>
            <person name="Luedi P."/>
            <person name="Choi S."/>
            <person name="Wing R.A."/>
            <person name="Flavier A."/>
            <person name="Gaffney T.D."/>
            <person name="Philippsen P."/>
        </authorList>
    </citation>
    <scope>NUCLEOTIDE SEQUENCE [LARGE SCALE GENOMIC DNA]</scope>
    <source>
        <strain>ATCC 10895 / CBS 109.51 / FGSC 9923 / NRRL Y-1056</strain>
    </source>
</reference>
<reference key="2">
    <citation type="journal article" date="2013" name="G3 (Bethesda)">
        <title>Genomes of Ashbya fungi isolated from insects reveal four mating-type loci, numerous translocations, lack of transposons, and distinct gene duplications.</title>
        <authorList>
            <person name="Dietrich F.S."/>
            <person name="Voegeli S."/>
            <person name="Kuo S."/>
            <person name="Philippsen P."/>
        </authorList>
    </citation>
    <scope>GENOME REANNOTATION</scope>
    <scope>SEQUENCE REVISION TO 84-87</scope>
    <source>
        <strain>ATCC 10895 / CBS 109.51 / FGSC 9923 / NRRL Y-1056</strain>
    </source>
</reference>
<gene>
    <name type="primary">RPL31</name>
    <name type="ordered locus">AER076C</name>
</gene>
<evidence type="ECO:0000305" key="1"/>
<keyword id="KW-1185">Reference proteome</keyword>
<keyword id="KW-0687">Ribonucleoprotein</keyword>
<keyword id="KW-0689">Ribosomal protein</keyword>
<dbReference type="EMBL" id="AE016818">
    <property type="protein sequence ID" value="AAS52760.2"/>
    <property type="molecule type" value="Genomic_DNA"/>
</dbReference>
<dbReference type="RefSeq" id="NP_984936.2">
    <property type="nucleotide sequence ID" value="NM_210290.2"/>
</dbReference>
<dbReference type="SMR" id="Q757D7"/>
<dbReference type="FunCoup" id="Q757D7">
    <property type="interactions" value="965"/>
</dbReference>
<dbReference type="STRING" id="284811.Q757D7"/>
<dbReference type="EnsemblFungi" id="AAS52760">
    <property type="protein sequence ID" value="AAS52760"/>
    <property type="gene ID" value="AGOS_AER076C"/>
</dbReference>
<dbReference type="GeneID" id="4621140"/>
<dbReference type="KEGG" id="ago:AGOS_AER076C"/>
<dbReference type="eggNOG" id="KOG0893">
    <property type="taxonomic scope" value="Eukaryota"/>
</dbReference>
<dbReference type="HOGENOM" id="CLU_112570_1_1_1"/>
<dbReference type="InParanoid" id="Q757D7"/>
<dbReference type="OMA" id="EVWKQGI"/>
<dbReference type="OrthoDB" id="9739313at2759"/>
<dbReference type="Proteomes" id="UP000000591">
    <property type="component" value="Chromosome V"/>
</dbReference>
<dbReference type="GO" id="GO:0022625">
    <property type="term" value="C:cytosolic large ribosomal subunit"/>
    <property type="evidence" value="ECO:0000318"/>
    <property type="project" value="GO_Central"/>
</dbReference>
<dbReference type="GO" id="GO:0030684">
    <property type="term" value="C:preribosome"/>
    <property type="evidence" value="ECO:0007669"/>
    <property type="project" value="EnsemblFungi"/>
</dbReference>
<dbReference type="GO" id="GO:0003735">
    <property type="term" value="F:structural constituent of ribosome"/>
    <property type="evidence" value="ECO:0000318"/>
    <property type="project" value="GO_Central"/>
</dbReference>
<dbReference type="GO" id="GO:0002181">
    <property type="term" value="P:cytoplasmic translation"/>
    <property type="evidence" value="ECO:0000318"/>
    <property type="project" value="GO_Central"/>
</dbReference>
<dbReference type="CDD" id="cd00463">
    <property type="entry name" value="Ribosomal_L31e"/>
    <property type="match status" value="1"/>
</dbReference>
<dbReference type="FunFam" id="3.10.440.10:FF:000001">
    <property type="entry name" value="60S ribosomal protein L31"/>
    <property type="match status" value="1"/>
</dbReference>
<dbReference type="Gene3D" id="3.10.440.10">
    <property type="match status" value="1"/>
</dbReference>
<dbReference type="HAMAP" id="MF_00410">
    <property type="entry name" value="Ribosomal_eL31"/>
    <property type="match status" value="1"/>
</dbReference>
<dbReference type="InterPro" id="IPR000054">
    <property type="entry name" value="Ribosomal_eL31"/>
</dbReference>
<dbReference type="InterPro" id="IPR020052">
    <property type="entry name" value="Ribosomal_eL31_CS"/>
</dbReference>
<dbReference type="InterPro" id="IPR023621">
    <property type="entry name" value="Ribosomal_eL31_dom_sf"/>
</dbReference>
<dbReference type="PANTHER" id="PTHR10956">
    <property type="entry name" value="60S RIBOSOMAL PROTEIN L31"/>
    <property type="match status" value="1"/>
</dbReference>
<dbReference type="PANTHER" id="PTHR10956:SF0">
    <property type="entry name" value="60S RIBOSOMAL PROTEIN L31"/>
    <property type="match status" value="1"/>
</dbReference>
<dbReference type="Pfam" id="PF01198">
    <property type="entry name" value="Ribosomal_L31e"/>
    <property type="match status" value="1"/>
</dbReference>
<dbReference type="SMART" id="SM01380">
    <property type="entry name" value="Ribosomal_L31e"/>
    <property type="match status" value="1"/>
</dbReference>
<dbReference type="SUPFAM" id="SSF54575">
    <property type="entry name" value="Ribosomal protein L31e"/>
    <property type="match status" value="1"/>
</dbReference>
<dbReference type="PROSITE" id="PS01144">
    <property type="entry name" value="RIBOSOMAL_L31E"/>
    <property type="match status" value="1"/>
</dbReference>
<comment type="similarity">
    <text evidence="1">Belongs to the eukaryotic ribosomal protein eL31 family.</text>
</comment>
<organism>
    <name type="scientific">Eremothecium gossypii (strain ATCC 10895 / CBS 109.51 / FGSC 9923 / NRRL Y-1056)</name>
    <name type="common">Yeast</name>
    <name type="synonym">Ashbya gossypii</name>
    <dbReference type="NCBI Taxonomy" id="284811"/>
    <lineage>
        <taxon>Eukaryota</taxon>
        <taxon>Fungi</taxon>
        <taxon>Dikarya</taxon>
        <taxon>Ascomycota</taxon>
        <taxon>Saccharomycotina</taxon>
        <taxon>Saccharomycetes</taxon>
        <taxon>Saccharomycetales</taxon>
        <taxon>Saccharomycetaceae</taxon>
        <taxon>Eremothecium</taxon>
    </lineage>
</organism>
<proteinExistence type="inferred from homology"/>
<protein>
    <recommendedName>
        <fullName evidence="1">Large ribosomal subunit protein eL31</fullName>
    </recommendedName>
    <alternativeName>
        <fullName>60S ribosomal protein L31</fullName>
    </alternativeName>
</protein>
<feature type="chain" id="PRO_0000153783" description="Large ribosomal subunit protein eL31">
    <location>
        <begin position="1"/>
        <end position="114"/>
    </location>
</feature>
<accession>Q757D7</accession>
<sequence>MAGLKDVVTREYTINLHKRLHGVTFKKRAPRAVKEIKKFAKLHMGTEDVRLDPRLNTEIWKRGVKGVPFRMRLRISRRRNEEDNAKNPLFSYVEPVVVASAKGLHTVVVEEEEA</sequence>